<keyword id="KW-0536">Nodulation</keyword>
<keyword id="KW-1185">Reference proteome</keyword>
<keyword id="KW-0732">Signal</keyword>
<dbReference type="EMBL" id="X03979">
    <property type="protein sequence ID" value="CAA27618.1"/>
    <property type="molecule type" value="mRNA"/>
</dbReference>
<dbReference type="EMBL" id="X05028">
    <property type="protein sequence ID" value="CAA28692.1"/>
    <property type="molecule type" value="Genomic_DNA"/>
</dbReference>
<dbReference type="PIR" id="S09552">
    <property type="entry name" value="S09552"/>
</dbReference>
<dbReference type="RefSeq" id="NP_001235855.1">
    <property type="nucleotide sequence ID" value="NM_001248926.1"/>
</dbReference>
<dbReference type="STRING" id="3847.P04672"/>
<dbReference type="PaxDb" id="3847-GLYMA13G44100.1"/>
<dbReference type="GeneID" id="547903"/>
<dbReference type="KEGG" id="gmx:547903"/>
<dbReference type="InParanoid" id="P04672"/>
<dbReference type="Proteomes" id="UP000008827">
    <property type="component" value="Unplaced"/>
</dbReference>
<dbReference type="GO" id="GO:0009877">
    <property type="term" value="P:nodulation"/>
    <property type="evidence" value="ECO:0007669"/>
    <property type="project" value="UniProtKB-KW"/>
</dbReference>
<dbReference type="InterPro" id="IPR003387">
    <property type="entry name" value="Nodulin"/>
</dbReference>
<dbReference type="Pfam" id="PF02451">
    <property type="entry name" value="Nodulin"/>
    <property type="match status" value="2"/>
</dbReference>
<comment type="induction">
    <text>During nodulation in legume roots after Rhizobium infection.</text>
</comment>
<comment type="similarity">
    <text evidence="3">Belongs to the nodulin 20 family.</text>
</comment>
<comment type="caution">
    <text evidence="3">It is uncertain whether Met-1 or Met-7 is the initiator.</text>
</comment>
<proteinExistence type="evidence at transcript level"/>
<name>NO44_SOYBN</name>
<sequence>MEEKILMRVIVITVFLFIGAATAEDAAAEAYESPKLKKLITDCTGHVGETCSTTTSSSGSEALMQKQDGLALCLLDSMERCLLDHQTNVGTLGDLIILPPFPPRPPVDPNIIPFPRPPNIVPFSPRGRRSKLDNHQTDAGTLGKVIPLPPIRPGPPLKIIPFPGTNIVPFPRPPNIVPFPRRRRSKLDNHQTDAGTLGDLIILPPFPPRPPVDPNIIPFPRPPNIVPFSPRGRRSKLDNHQTDAGTLGRVIPLPPIRPGPPLKIIPFPGTNIVPFPKPYIPHSYNTITNLLGARRDQVQDLPLLIQTTQLRTVLGICSHVTARTCLTAPNVATSDLEACLTPSMNQCVYPPGAESGSPPI</sequence>
<protein>
    <recommendedName>
        <fullName>Nodulin-44</fullName>
        <shortName>N-44</shortName>
    </recommendedName>
    <alternativeName>
        <fullName>Nodulin E27</fullName>
    </alternativeName>
</protein>
<reference key="1">
    <citation type="journal article" date="1986" name="Mol. Gen. Genet.">
        <title>Expression of host genes during root nodule development in soybeans.</title>
        <authorList>
            <person name="Sengupta-Gopalan C."/>
            <person name="Pitas J.W."/>
            <person name="Thompson D.V."/>
            <person name="Hoffman L.M."/>
        </authorList>
    </citation>
    <scope>NUCLEOTIDE SEQUENCE [MRNA]</scope>
    <source>
        <tissue>Root nodule</tissue>
    </source>
</reference>
<reference key="2">
    <citation type="journal article" date="1987" name="Nucleic Acids Res.">
        <title>A small family of nodule specific genes from soybean.</title>
        <authorList>
            <person name="Sandal N.N."/>
            <person name="Bojsen K."/>
            <person name="Marcker K.A."/>
        </authorList>
    </citation>
    <scope>NUCLEOTIDE SEQUENCE [GENOMIC DNA]</scope>
</reference>
<accession>P04672</accession>
<accession>P07127</accession>
<evidence type="ECO:0000255" key="1"/>
<evidence type="ECO:0000256" key="2">
    <source>
        <dbReference type="SAM" id="MobiDB-lite"/>
    </source>
</evidence>
<evidence type="ECO:0000305" key="3"/>
<feature type="signal peptide" evidence="1">
    <location>
        <begin position="1"/>
        <end position="23"/>
    </location>
</feature>
<feature type="chain" id="PRO_0000019791" description="Nodulin-44">
    <location>
        <begin position="24"/>
        <end position="360"/>
    </location>
</feature>
<feature type="region of interest" description="Disordered" evidence="2">
    <location>
        <begin position="123"/>
        <end position="148"/>
    </location>
</feature>
<feature type="region of interest" description="Disordered" evidence="2">
    <location>
        <begin position="228"/>
        <end position="249"/>
    </location>
</feature>
<organism>
    <name type="scientific">Glycine max</name>
    <name type="common">Soybean</name>
    <name type="synonym">Glycine hispida</name>
    <dbReference type="NCBI Taxonomy" id="3847"/>
    <lineage>
        <taxon>Eukaryota</taxon>
        <taxon>Viridiplantae</taxon>
        <taxon>Streptophyta</taxon>
        <taxon>Embryophyta</taxon>
        <taxon>Tracheophyta</taxon>
        <taxon>Spermatophyta</taxon>
        <taxon>Magnoliopsida</taxon>
        <taxon>eudicotyledons</taxon>
        <taxon>Gunneridae</taxon>
        <taxon>Pentapetalae</taxon>
        <taxon>rosids</taxon>
        <taxon>fabids</taxon>
        <taxon>Fabales</taxon>
        <taxon>Fabaceae</taxon>
        <taxon>Papilionoideae</taxon>
        <taxon>50 kb inversion clade</taxon>
        <taxon>NPAAA clade</taxon>
        <taxon>indigoferoid/millettioid clade</taxon>
        <taxon>Phaseoleae</taxon>
        <taxon>Glycine</taxon>
        <taxon>Glycine subgen. Soja</taxon>
    </lineage>
</organism>